<comment type="function">
    <text evidence="2">Attaches a formyl group to the free amino group of methionyl-tRNA(fMet). The formyl group appears to play a dual role in the initiator identity of N-formylmethionyl-tRNA by promoting its recognition by IF2 and preventing the misappropriation of this tRNA by the elongation apparatus.</text>
</comment>
<comment type="catalytic activity">
    <reaction evidence="2">
        <text>L-methionyl-tRNA(fMet) + (6R)-10-formyltetrahydrofolate = N-formyl-L-methionyl-tRNA(fMet) + (6S)-5,6,7,8-tetrahydrofolate + H(+)</text>
        <dbReference type="Rhea" id="RHEA:24380"/>
        <dbReference type="Rhea" id="RHEA-COMP:9952"/>
        <dbReference type="Rhea" id="RHEA-COMP:9953"/>
        <dbReference type="ChEBI" id="CHEBI:15378"/>
        <dbReference type="ChEBI" id="CHEBI:57453"/>
        <dbReference type="ChEBI" id="CHEBI:78530"/>
        <dbReference type="ChEBI" id="CHEBI:78844"/>
        <dbReference type="ChEBI" id="CHEBI:195366"/>
        <dbReference type="EC" id="2.1.2.9"/>
    </reaction>
</comment>
<comment type="domain">
    <text>Composed of an N- and a C-terminal domain. The N-terminal domain carries the tetrahydrofolate (THF)-binding site and the C-terminal domain is presumably involved in positioning the Met-tRNA substrate for the formylation reaction.</text>
</comment>
<comment type="similarity">
    <text evidence="2">Belongs to the Fmt family.</text>
</comment>
<keyword id="KW-0648">Protein biosynthesis</keyword>
<keyword id="KW-1185">Reference proteome</keyword>
<keyword id="KW-0808">Transferase</keyword>
<protein>
    <recommendedName>
        <fullName evidence="2">Methionyl-tRNA formyltransferase</fullName>
        <ecNumber evidence="2">2.1.2.9</ecNumber>
    </recommendedName>
</protein>
<organism>
    <name type="scientific">Escherichia coli O6:H1 (strain CFT073 / ATCC 700928 / UPEC)</name>
    <dbReference type="NCBI Taxonomy" id="199310"/>
    <lineage>
        <taxon>Bacteria</taxon>
        <taxon>Pseudomonadati</taxon>
        <taxon>Pseudomonadota</taxon>
        <taxon>Gammaproteobacteria</taxon>
        <taxon>Enterobacterales</taxon>
        <taxon>Enterobacteriaceae</taxon>
        <taxon>Escherichia</taxon>
    </lineage>
</organism>
<dbReference type="EC" id="2.1.2.9" evidence="2"/>
<dbReference type="EMBL" id="AE014075">
    <property type="protein sequence ID" value="AAN82486.1"/>
    <property type="molecule type" value="Genomic_DNA"/>
</dbReference>
<dbReference type="RefSeq" id="WP_000004425.1">
    <property type="nucleotide sequence ID" value="NZ_CP051263.1"/>
</dbReference>
<dbReference type="SMR" id="Q8FD13"/>
<dbReference type="STRING" id="199310.c4048"/>
<dbReference type="KEGG" id="ecc:c4048"/>
<dbReference type="eggNOG" id="COG0223">
    <property type="taxonomic scope" value="Bacteria"/>
</dbReference>
<dbReference type="HOGENOM" id="CLU_033347_1_2_6"/>
<dbReference type="BioCyc" id="ECOL199310:C4048-MONOMER"/>
<dbReference type="Proteomes" id="UP000001410">
    <property type="component" value="Chromosome"/>
</dbReference>
<dbReference type="GO" id="GO:0005829">
    <property type="term" value="C:cytosol"/>
    <property type="evidence" value="ECO:0007669"/>
    <property type="project" value="TreeGrafter"/>
</dbReference>
<dbReference type="GO" id="GO:0004479">
    <property type="term" value="F:methionyl-tRNA formyltransferase activity"/>
    <property type="evidence" value="ECO:0007669"/>
    <property type="project" value="UniProtKB-UniRule"/>
</dbReference>
<dbReference type="CDD" id="cd08646">
    <property type="entry name" value="FMT_core_Met-tRNA-FMT_N"/>
    <property type="match status" value="1"/>
</dbReference>
<dbReference type="CDD" id="cd08704">
    <property type="entry name" value="Met_tRNA_FMT_C"/>
    <property type="match status" value="1"/>
</dbReference>
<dbReference type="FunFam" id="3.10.25.10:FF:000001">
    <property type="entry name" value="Methionyl-tRNA formyltransferase"/>
    <property type="match status" value="1"/>
</dbReference>
<dbReference type="FunFam" id="3.40.50.12230:FF:000001">
    <property type="entry name" value="Methionyl-tRNA formyltransferase"/>
    <property type="match status" value="1"/>
</dbReference>
<dbReference type="FunFam" id="3.40.50.170:FF:000003">
    <property type="entry name" value="Methionyl-tRNA formyltransferase"/>
    <property type="match status" value="1"/>
</dbReference>
<dbReference type="Gene3D" id="3.10.25.10">
    <property type="entry name" value="Formyl transferase, C-terminal domain"/>
    <property type="match status" value="1"/>
</dbReference>
<dbReference type="Gene3D" id="3.40.50.170">
    <property type="entry name" value="Formyl transferase, N-terminal domain"/>
    <property type="match status" value="1"/>
</dbReference>
<dbReference type="HAMAP" id="MF_00182">
    <property type="entry name" value="Formyl_trans"/>
    <property type="match status" value="1"/>
</dbReference>
<dbReference type="InterPro" id="IPR005794">
    <property type="entry name" value="Fmt"/>
</dbReference>
<dbReference type="InterPro" id="IPR005793">
    <property type="entry name" value="Formyl_trans_C"/>
</dbReference>
<dbReference type="InterPro" id="IPR037022">
    <property type="entry name" value="Formyl_trans_C_sf"/>
</dbReference>
<dbReference type="InterPro" id="IPR002376">
    <property type="entry name" value="Formyl_transf_N"/>
</dbReference>
<dbReference type="InterPro" id="IPR036477">
    <property type="entry name" value="Formyl_transf_N_sf"/>
</dbReference>
<dbReference type="InterPro" id="IPR011034">
    <property type="entry name" value="Formyl_transferase-like_C_sf"/>
</dbReference>
<dbReference type="InterPro" id="IPR001555">
    <property type="entry name" value="GART_AS"/>
</dbReference>
<dbReference type="InterPro" id="IPR044135">
    <property type="entry name" value="Met-tRNA-FMT_C"/>
</dbReference>
<dbReference type="InterPro" id="IPR041711">
    <property type="entry name" value="Met-tRNA-FMT_N"/>
</dbReference>
<dbReference type="NCBIfam" id="TIGR00460">
    <property type="entry name" value="fmt"/>
    <property type="match status" value="1"/>
</dbReference>
<dbReference type="PANTHER" id="PTHR11138">
    <property type="entry name" value="METHIONYL-TRNA FORMYLTRANSFERASE"/>
    <property type="match status" value="1"/>
</dbReference>
<dbReference type="PANTHER" id="PTHR11138:SF5">
    <property type="entry name" value="METHIONYL-TRNA FORMYLTRANSFERASE, MITOCHONDRIAL"/>
    <property type="match status" value="1"/>
</dbReference>
<dbReference type="Pfam" id="PF02911">
    <property type="entry name" value="Formyl_trans_C"/>
    <property type="match status" value="1"/>
</dbReference>
<dbReference type="Pfam" id="PF00551">
    <property type="entry name" value="Formyl_trans_N"/>
    <property type="match status" value="1"/>
</dbReference>
<dbReference type="SUPFAM" id="SSF50486">
    <property type="entry name" value="FMT C-terminal domain-like"/>
    <property type="match status" value="1"/>
</dbReference>
<dbReference type="SUPFAM" id="SSF53328">
    <property type="entry name" value="Formyltransferase"/>
    <property type="match status" value="1"/>
</dbReference>
<dbReference type="PROSITE" id="PS00373">
    <property type="entry name" value="GART"/>
    <property type="match status" value="1"/>
</dbReference>
<feature type="initiator methionine" description="Removed" evidence="1">
    <location>
        <position position="1"/>
    </location>
</feature>
<feature type="chain" id="PRO_0000082960" description="Methionyl-tRNA formyltransferase">
    <location>
        <begin position="2"/>
        <end position="315"/>
    </location>
</feature>
<feature type="region of interest" description="N-terminal domain">
    <location>
        <begin position="2"/>
        <end position="189"/>
    </location>
</feature>
<feature type="region of interest" description="C-terminal domain">
    <location>
        <begin position="210"/>
        <end position="315"/>
    </location>
</feature>
<feature type="binding site" evidence="2">
    <location>
        <begin position="113"/>
        <end position="116"/>
    </location>
    <ligand>
        <name>(6S)-5,6,7,8-tetrahydrofolate</name>
        <dbReference type="ChEBI" id="CHEBI:57453"/>
    </ligand>
</feature>
<gene>
    <name evidence="2" type="primary">fmt</name>
    <name type="ordered locus">c4048</name>
</gene>
<proteinExistence type="inferred from homology"/>
<sequence length="315" mass="34260">MSESLRIIFAGTPDFAARHLDALLSSGHNIVGVFTQPDRPAGRGKKLMPSPVKVLAEDKGLPVFQPVSLRPQENQQRVADLQADVMVVVAYGLILPKAVLEMPRLGCINVHGSLLPRWRGAAPIQRSLWAGDAETGVTIMQMDVGLDTGDMLYKLSCPITAEDTSGTLYDKLAELGPQGLITTLKQLADGTAKPEVQDETLVTYAEKLSKEEARIDWSLSAAQLERCIRAFNPWPMSWLEIEGQPVKVWKASVIDTTTKAAPGTILEANKQGIQVATGDGILNLLSMQPAGKKAMSVQDLLNSRREWFVPGNRLA</sequence>
<accession>Q8FD13</accession>
<evidence type="ECO:0000250" key="1"/>
<evidence type="ECO:0000255" key="2">
    <source>
        <dbReference type="HAMAP-Rule" id="MF_00182"/>
    </source>
</evidence>
<reference key="1">
    <citation type="journal article" date="2002" name="Proc. Natl. Acad. Sci. U.S.A.">
        <title>Extensive mosaic structure revealed by the complete genome sequence of uropathogenic Escherichia coli.</title>
        <authorList>
            <person name="Welch R.A."/>
            <person name="Burland V."/>
            <person name="Plunkett G. III"/>
            <person name="Redford P."/>
            <person name="Roesch P."/>
            <person name="Rasko D."/>
            <person name="Buckles E.L."/>
            <person name="Liou S.-R."/>
            <person name="Boutin A."/>
            <person name="Hackett J."/>
            <person name="Stroud D."/>
            <person name="Mayhew G.F."/>
            <person name="Rose D.J."/>
            <person name="Zhou S."/>
            <person name="Schwartz D.C."/>
            <person name="Perna N.T."/>
            <person name="Mobley H.L.T."/>
            <person name="Donnenberg M.S."/>
            <person name="Blattner F.R."/>
        </authorList>
    </citation>
    <scope>NUCLEOTIDE SEQUENCE [LARGE SCALE GENOMIC DNA]</scope>
    <source>
        <strain>CFT073 / ATCC 700928 / UPEC</strain>
    </source>
</reference>
<name>FMT_ECOL6</name>